<name>CMKMT_RAT</name>
<evidence type="ECO:0000250" key="1"/>
<evidence type="ECO:0000250" key="2">
    <source>
        <dbReference type="UniProtKB" id="Q7Z624"/>
    </source>
</evidence>
<evidence type="ECO:0000255" key="3">
    <source>
        <dbReference type="PROSITE-ProRule" id="PRU00942"/>
    </source>
</evidence>
<evidence type="ECO:0000256" key="4">
    <source>
        <dbReference type="SAM" id="MobiDB-lite"/>
    </source>
</evidence>
<evidence type="ECO:0000269" key="5">
    <source>
    </source>
</evidence>
<evidence type="ECO:0000269" key="6">
    <source>
    </source>
</evidence>
<evidence type="ECO:0000305" key="7"/>
<proteinExistence type="evidence at protein level"/>
<organism>
    <name type="scientific">Rattus norvegicus</name>
    <name type="common">Rat</name>
    <dbReference type="NCBI Taxonomy" id="10116"/>
    <lineage>
        <taxon>Eukaryota</taxon>
        <taxon>Metazoa</taxon>
        <taxon>Chordata</taxon>
        <taxon>Craniata</taxon>
        <taxon>Vertebrata</taxon>
        <taxon>Euteleostomi</taxon>
        <taxon>Mammalia</taxon>
        <taxon>Eutheria</taxon>
        <taxon>Euarchontoglires</taxon>
        <taxon>Glires</taxon>
        <taxon>Rodentia</taxon>
        <taxon>Myomorpha</taxon>
        <taxon>Muroidea</taxon>
        <taxon>Muridae</taxon>
        <taxon>Murinae</taxon>
        <taxon>Rattus</taxon>
    </lineage>
</organism>
<sequence>MESQVAVAGDGETEAEAGKGPMIDSASQGSLVSAPKGAVRWKLLRQVLKQKQLDDGLRHVSVRRFESFNLFSVTEAKNRGTEKEAGAWVQYTSIFYPEYSISLRRNSGSLSVEDVLTSFDNTGNVCIWPSEEVLAYYCLKHSHLFRDLAVCELGGGMTCLAGLMVAISADVKEVLLTDGNEKAIRNVNSIIASNKKTGVFKTQKISSCVLRWDNKTDVSQLEGHFDIVMCADCLFLDQYRASLVDAIKRLLQPSGKALVFAPRRGNTFNQFCNLAEKAGLSLQRHENYDERISNFHSKLKKEGSDVYEENLHYPLLLILTKTG</sequence>
<comment type="function">
    <text evidence="5">Catalyzes the trimethylation of 'Lys-116' in calmodulin.</text>
</comment>
<comment type="catalytic activity">
    <reaction evidence="3 5 6">
        <text>[calmodulin]-L-lysine + S-adenosyl-L-methionine = [calmodulin]-N(6)-methyl-L-lysine + S-adenosyl-L-homocysteine + H(+)</text>
        <dbReference type="Rhea" id="RHEA:21556"/>
        <dbReference type="Rhea" id="RHEA-COMP:11360"/>
        <dbReference type="Rhea" id="RHEA-COMP:11361"/>
        <dbReference type="ChEBI" id="CHEBI:15378"/>
        <dbReference type="ChEBI" id="CHEBI:29969"/>
        <dbReference type="ChEBI" id="CHEBI:57856"/>
        <dbReference type="ChEBI" id="CHEBI:59789"/>
        <dbReference type="ChEBI" id="CHEBI:61929"/>
        <dbReference type="EC" id="2.1.1.60"/>
    </reaction>
</comment>
<comment type="subunit">
    <text evidence="1 7">Monomer (Probable). Interacts with HSP90, probably as a client (By similarity).</text>
</comment>
<comment type="subcellular location">
    <subcellularLocation>
        <location evidence="6">Cytoplasm</location>
    </subcellularLocation>
    <subcellularLocation>
        <location evidence="2">Nucleus</location>
    </subcellularLocation>
</comment>
<comment type="similarity">
    <text evidence="3">Belongs to the class I-like SAM-binding methyltransferase superfamily. CLNMT methyltransferase family.</text>
</comment>
<keyword id="KW-0963">Cytoplasm</keyword>
<keyword id="KW-0489">Methyltransferase</keyword>
<keyword id="KW-0539">Nucleus</keyword>
<keyword id="KW-1185">Reference proteome</keyword>
<keyword id="KW-0949">S-adenosyl-L-methionine</keyword>
<keyword id="KW-0808">Transferase</keyword>
<dbReference type="EC" id="2.1.1.60"/>
<dbReference type="EMBL" id="BC159411">
    <property type="protein sequence ID" value="AAI59412.1"/>
    <property type="molecule type" value="mRNA"/>
</dbReference>
<dbReference type="EMBL" id="CH473947">
    <property type="protein sequence ID" value="EDM02674.1"/>
    <property type="molecule type" value="Genomic_DNA"/>
</dbReference>
<dbReference type="RefSeq" id="NP_001127935.1">
    <property type="nucleotide sequence ID" value="NM_001134463.1"/>
</dbReference>
<dbReference type="SMR" id="B0K012"/>
<dbReference type="FunCoup" id="B0K012">
    <property type="interactions" value="2048"/>
</dbReference>
<dbReference type="STRING" id="10116.ENSRNOP00000048187"/>
<dbReference type="PhosphoSitePlus" id="B0K012"/>
<dbReference type="PaxDb" id="10116-ENSRNOP00000048187"/>
<dbReference type="Ensembl" id="ENSRNOT00000048550.4">
    <property type="protein sequence ID" value="ENSRNOP00000048187.4"/>
    <property type="gene ID" value="ENSRNOG00000030629.4"/>
</dbReference>
<dbReference type="GeneID" id="299521"/>
<dbReference type="KEGG" id="rno:299521"/>
<dbReference type="UCSC" id="RGD:1310453">
    <property type="organism name" value="rat"/>
</dbReference>
<dbReference type="AGR" id="RGD:1310453"/>
<dbReference type="CTD" id="79823"/>
<dbReference type="RGD" id="1310453">
    <property type="gene designation" value="Camkmt"/>
</dbReference>
<dbReference type="eggNOG" id="KOG3201">
    <property type="taxonomic scope" value="Eukaryota"/>
</dbReference>
<dbReference type="GeneTree" id="ENSGT00390000002168"/>
<dbReference type="HOGENOM" id="CLU_057006_3_1_1"/>
<dbReference type="InParanoid" id="B0K012"/>
<dbReference type="OMA" id="WYYLAPQ"/>
<dbReference type="OrthoDB" id="41947at9989"/>
<dbReference type="PhylomeDB" id="B0K012"/>
<dbReference type="TreeFam" id="TF316589"/>
<dbReference type="Reactome" id="R-RNO-2514859">
    <property type="pathway name" value="Inactivation, recovery and regulation of the phototransduction cascade"/>
</dbReference>
<dbReference type="Reactome" id="R-RNO-8876725">
    <property type="pathway name" value="Protein methylation"/>
</dbReference>
<dbReference type="PRO" id="PR:B0K012"/>
<dbReference type="Proteomes" id="UP000002494">
    <property type="component" value="Chromosome 6"/>
</dbReference>
<dbReference type="Proteomes" id="UP000234681">
    <property type="component" value="Chromosome 6"/>
</dbReference>
<dbReference type="GO" id="GO:0005737">
    <property type="term" value="C:cytoplasm"/>
    <property type="evidence" value="ECO:0000266"/>
    <property type="project" value="RGD"/>
</dbReference>
<dbReference type="GO" id="GO:0005730">
    <property type="term" value="C:nucleolus"/>
    <property type="evidence" value="ECO:0007669"/>
    <property type="project" value="Ensembl"/>
</dbReference>
<dbReference type="GO" id="GO:0005654">
    <property type="term" value="C:nucleoplasm"/>
    <property type="evidence" value="ECO:0007669"/>
    <property type="project" value="Ensembl"/>
</dbReference>
<dbReference type="GO" id="GO:0032991">
    <property type="term" value="C:protein-containing complex"/>
    <property type="evidence" value="ECO:0000266"/>
    <property type="project" value="RGD"/>
</dbReference>
<dbReference type="GO" id="GO:0018025">
    <property type="term" value="F:calmodulin-lysine N-methyltransferase activity"/>
    <property type="evidence" value="ECO:0000266"/>
    <property type="project" value="RGD"/>
</dbReference>
<dbReference type="GO" id="GO:0031072">
    <property type="term" value="F:heat shock protein binding"/>
    <property type="evidence" value="ECO:0000266"/>
    <property type="project" value="RGD"/>
</dbReference>
<dbReference type="GO" id="GO:0032259">
    <property type="term" value="P:methylation"/>
    <property type="evidence" value="ECO:0007669"/>
    <property type="project" value="UniProtKB-KW"/>
</dbReference>
<dbReference type="GO" id="GO:0007005">
    <property type="term" value="P:mitochondrion organization"/>
    <property type="evidence" value="ECO:0000266"/>
    <property type="project" value="RGD"/>
</dbReference>
<dbReference type="FunFam" id="3.40.50.150:FF:000140">
    <property type="entry name" value="Calmodulin-lysine N-methyltransferase"/>
    <property type="match status" value="1"/>
</dbReference>
<dbReference type="Gene3D" id="3.40.50.150">
    <property type="entry name" value="Vaccinia Virus protein VP39"/>
    <property type="match status" value="1"/>
</dbReference>
<dbReference type="InterPro" id="IPR025800">
    <property type="entry name" value="CaM-Lys-N-MeTrfase"/>
</dbReference>
<dbReference type="InterPro" id="IPR019410">
    <property type="entry name" value="Methyltransf_16"/>
</dbReference>
<dbReference type="InterPro" id="IPR029063">
    <property type="entry name" value="SAM-dependent_MTases_sf"/>
</dbReference>
<dbReference type="PANTHER" id="PTHR13539">
    <property type="entry name" value="CALMODULIN-LYSINE N-METHYLTRANSFERASE"/>
    <property type="match status" value="1"/>
</dbReference>
<dbReference type="PANTHER" id="PTHR13539:SF3">
    <property type="entry name" value="CALMODULIN-LYSINE N-METHYLTRANSFERASE"/>
    <property type="match status" value="1"/>
</dbReference>
<dbReference type="Pfam" id="PF10294">
    <property type="entry name" value="Methyltransf_16"/>
    <property type="match status" value="1"/>
</dbReference>
<dbReference type="SUPFAM" id="SSF53335">
    <property type="entry name" value="S-adenosyl-L-methionine-dependent methyltransferases"/>
    <property type="match status" value="1"/>
</dbReference>
<dbReference type="PROSITE" id="PS51610">
    <property type="entry name" value="SAM_CLNMT"/>
    <property type="match status" value="1"/>
</dbReference>
<protein>
    <recommendedName>
        <fullName>Calmodulin-lysine N-methyltransferase</fullName>
        <shortName>CLNMT</shortName>
        <shortName>CaM KMT</shortName>
        <ecNumber>2.1.1.60</ecNumber>
    </recommendedName>
</protein>
<accession>B0K012</accession>
<feature type="chain" id="PRO_0000403786" description="Calmodulin-lysine N-methyltransferase">
    <location>
        <begin position="1"/>
        <end position="323"/>
    </location>
</feature>
<feature type="region of interest" description="Disordered" evidence="4">
    <location>
        <begin position="1"/>
        <end position="29"/>
    </location>
</feature>
<gene>
    <name type="primary">Camkmt</name>
    <name type="synonym">Clnmt</name>
</gene>
<reference key="1">
    <citation type="journal article" date="2004" name="Genome Res.">
        <title>The status, quality, and expansion of the NIH full-length cDNA project: the Mammalian Gene Collection (MGC).</title>
        <authorList>
            <consortium name="The MGC Project Team"/>
        </authorList>
    </citation>
    <scope>NUCLEOTIDE SEQUENCE [LARGE SCALE MRNA]</scope>
    <source>
        <tissue>Brain</tissue>
    </source>
</reference>
<reference key="2">
    <citation type="submission" date="2005-07" db="EMBL/GenBank/DDBJ databases">
        <authorList>
            <person name="Mural R.J."/>
            <person name="Li P.W."/>
            <person name="Adams M.D."/>
            <person name="Amanatides P.G."/>
            <person name="Baden-Tillson H."/>
            <person name="Barnstead M."/>
            <person name="Chin S.H."/>
            <person name="Dew I."/>
            <person name="Evans C.A."/>
            <person name="Ferriera S."/>
            <person name="Flanigan M."/>
            <person name="Fosler C."/>
            <person name="Glodek A."/>
            <person name="Gu Z."/>
            <person name="Holt R.A."/>
            <person name="Jennings D."/>
            <person name="Kraft C.L."/>
            <person name="Lu F."/>
            <person name="Nguyen T."/>
            <person name="Nusskern D.R."/>
            <person name="Pfannkoch C.M."/>
            <person name="Sitter C."/>
            <person name="Sutton G.G."/>
            <person name="Venter J.C."/>
            <person name="Wang Z."/>
            <person name="Woodage T."/>
            <person name="Zheng X.H."/>
            <person name="Zhong F."/>
        </authorList>
    </citation>
    <scope>NUCLEOTIDE SEQUENCE [LARGE SCALE GENOMIC DNA]</scope>
    <source>
        <strain>Brown Norway</strain>
    </source>
</reference>
<reference key="3">
    <citation type="journal article" date="1986" name="J. Biol. Chem.">
        <title>Calmodulin N-methyltransferase. Partial purification and characterization.</title>
        <authorList>
            <person name="Rowe P.M."/>
            <person name="Wright L.S."/>
            <person name="Siegel F.L."/>
        </authorList>
    </citation>
    <scope>CATALYTIC ACTIVITY</scope>
    <scope>SUBUNIT</scope>
    <scope>SUBCELLULAR LOCATION</scope>
</reference>
<reference key="4">
    <citation type="journal article" date="2010" name="Nat. Commun.">
        <title>Calmodulin methyltransferase is an evolutionarily conserved enzyme that trimethylates Lys-115 in calmodulin.</title>
        <authorList>
            <person name="Magnani R."/>
            <person name="Dirk L.M."/>
            <person name="Trievel R.C."/>
            <person name="Houtz R.L."/>
        </authorList>
    </citation>
    <scope>FUNCTION</scope>
    <scope>CATALYTIC ACTIVITY</scope>
</reference>